<protein>
    <recommendedName>
        <fullName>C-hordein</fullName>
    </recommendedName>
</protein>
<dbReference type="GO" id="GO:0045735">
    <property type="term" value="F:nutrient reservoir activity"/>
    <property type="evidence" value="ECO:0007669"/>
    <property type="project" value="UniProtKB-KW"/>
</dbReference>
<reference key="1">
    <citation type="journal article" date="1980" name="Nature">
        <title>N-terminal amino acid sequence homology of storage protein components from barley and a diploid wheat.</title>
        <authorList>
            <person name="Shewry P.R."/>
            <person name="Autran J.-C."/>
            <person name="Nimmo C.C."/>
            <person name="Lew E.J.-L."/>
            <person name="Kasarda D.D."/>
        </authorList>
    </citation>
    <scope>PROTEIN SEQUENCE</scope>
</reference>
<accession>P02864</accession>
<organism>
    <name type="scientific">Hordeum vulgare subsp. spontaneum</name>
    <name type="common">Wild barley</name>
    <name type="synonym">Hordeum spontaneum</name>
    <dbReference type="NCBI Taxonomy" id="77009"/>
    <lineage>
        <taxon>Eukaryota</taxon>
        <taxon>Viridiplantae</taxon>
        <taxon>Streptophyta</taxon>
        <taxon>Embryophyta</taxon>
        <taxon>Tracheophyta</taxon>
        <taxon>Spermatophyta</taxon>
        <taxon>Magnoliopsida</taxon>
        <taxon>Liliopsida</taxon>
        <taxon>Poales</taxon>
        <taxon>Poaceae</taxon>
        <taxon>BOP clade</taxon>
        <taxon>Pooideae</taxon>
        <taxon>Triticodae</taxon>
        <taxon>Triticeae</taxon>
        <taxon>Hordeinae</taxon>
        <taxon>Hordeum</taxon>
    </lineage>
</organism>
<feature type="chain" id="PRO_0000102602" description="C-hordein">
    <location>
        <begin position="1"/>
        <end position="28" status="greater than"/>
    </location>
</feature>
<feature type="region of interest" description="Disordered" evidence="1">
    <location>
        <begin position="1"/>
        <end position="28"/>
    </location>
</feature>
<feature type="non-terminal residue">
    <location>
        <position position="28"/>
    </location>
</feature>
<keyword id="KW-0903">Direct protein sequencing</keyword>
<keyword id="KW-0708">Seed storage protein</keyword>
<keyword id="KW-0758">Storage protein</keyword>
<name>HORC_HORVS</name>
<sequence>RQLNPSSQELQSPQQSYLQQPYPQNPYL</sequence>
<comment type="function">
    <text>Sulfur-poor seed storage protein.</text>
</comment>
<comment type="tissue specificity">
    <text>Developing endosperm.</text>
</comment>
<proteinExistence type="evidence at protein level"/>
<evidence type="ECO:0000256" key="1">
    <source>
        <dbReference type="SAM" id="MobiDB-lite"/>
    </source>
</evidence>